<name>NCKX1_BISBI</name>
<proteinExistence type="evidence at transcript level"/>
<keyword id="KW-0050">Antiport</keyword>
<keyword id="KW-0106">Calcium</keyword>
<keyword id="KW-0109">Calcium transport</keyword>
<keyword id="KW-1003">Cell membrane</keyword>
<keyword id="KW-0406">Ion transport</keyword>
<keyword id="KW-0472">Membrane</keyword>
<keyword id="KW-0630">Potassium</keyword>
<keyword id="KW-0633">Potassium transport</keyword>
<keyword id="KW-0716">Sensory transduction</keyword>
<keyword id="KW-0915">Sodium</keyword>
<keyword id="KW-0739">Sodium transport</keyword>
<keyword id="KW-0769">Symport</keyword>
<keyword id="KW-0812">Transmembrane</keyword>
<keyword id="KW-1133">Transmembrane helix</keyword>
<keyword id="KW-0813">Transport</keyword>
<keyword id="KW-0844">Vision</keyword>
<feature type="chain" id="PRO_0000209495" description="Sodium/potassium/calcium exchanger 1">
    <location>
        <begin position="1" status="less than"/>
        <end position="300" status="greater than"/>
    </location>
</feature>
<feature type="transmembrane region" description="Helical" evidence="3">
    <location>
        <begin position="259"/>
        <end position="275"/>
    </location>
</feature>
<feature type="region of interest" description="Disordered" evidence="4">
    <location>
        <begin position="1"/>
        <end position="251"/>
    </location>
</feature>
<feature type="compositionally biased region" description="Acidic residues" evidence="4">
    <location>
        <begin position="92"/>
        <end position="102"/>
    </location>
</feature>
<feature type="compositionally biased region" description="Acidic residues" evidence="4">
    <location>
        <begin position="109"/>
        <end position="119"/>
    </location>
</feature>
<feature type="compositionally biased region" description="Acidic residues" evidence="4">
    <location>
        <begin position="126"/>
        <end position="136"/>
    </location>
</feature>
<feature type="compositionally biased region" description="Acidic residues" evidence="4">
    <location>
        <begin position="158"/>
        <end position="175"/>
    </location>
</feature>
<feature type="compositionally biased region" description="Acidic residues" evidence="4">
    <location>
        <begin position="215"/>
        <end position="244"/>
    </location>
</feature>
<feature type="non-terminal residue">
    <location>
        <position position="1"/>
    </location>
</feature>
<feature type="non-terminal residue">
    <location>
        <position position="300"/>
    </location>
</feature>
<comment type="function">
    <text evidence="1">Calcium, potassium:sodium antiporter that transports 1 Ca(2+) and 1 K(+) in exchange for 4 Na(+). Critical component of the visual transduction cascade, controlling the calcium concentration of outer segments during light and darkness. Light causes a rapid lowering of cytosolic free calcium in the outer segment of both retinal rod and cone photoreceptors and the light-induced lowering of calcium is caused by extrusion via this protein which plays a key role in the process of light adaptation.</text>
</comment>
<comment type="catalytic activity">
    <reaction evidence="2">
        <text>Ca(2+)(out) + K(+)(out) + 4 Na(+)(in) = Ca(2+)(in) + K(+)(in) + 4 Na(+)(out)</text>
        <dbReference type="Rhea" id="RHEA:69967"/>
        <dbReference type="ChEBI" id="CHEBI:29101"/>
        <dbReference type="ChEBI" id="CHEBI:29103"/>
        <dbReference type="ChEBI" id="CHEBI:29108"/>
    </reaction>
</comment>
<comment type="subcellular location">
    <subcellularLocation>
        <location evidence="2">Cell membrane</location>
        <topology evidence="3">Multi-pass membrane protein</topology>
    </subcellularLocation>
</comment>
<comment type="PTM">
    <text evidence="2">The uncleaved signal sequence is required for efficient membrane targeting and proper membrane integration and topology.</text>
</comment>
<comment type="similarity">
    <text evidence="5">Belongs to the Ca(2+):cation antiporter (CaCA) (TC 2.A.19) family. SLC24A subfamily.</text>
</comment>
<accession>O46383</accession>
<reference key="1">
    <citation type="journal article" date="1998" name="Invest. Ophthalmol. Vis. Sci.">
        <title>cDNA cloning of the human retinal rod Na-Ca + K exchanger: comparison with a revised bovine sequence.</title>
        <authorList>
            <person name="Tucker J.E."/>
            <person name="Winkfein R.J."/>
            <person name="Cooper C.B."/>
            <person name="Schnetkamp P.P.M."/>
        </authorList>
    </citation>
    <scope>NUCLEOTIDE SEQUENCE [MRNA]</scope>
</reference>
<dbReference type="EMBL" id="AF025480">
    <property type="protein sequence ID" value="AAC13320.1"/>
    <property type="molecule type" value="mRNA"/>
</dbReference>
<dbReference type="GO" id="GO:0005886">
    <property type="term" value="C:plasma membrane"/>
    <property type="evidence" value="ECO:0007669"/>
    <property type="project" value="UniProtKB-SubCell"/>
</dbReference>
<dbReference type="GO" id="GO:0005262">
    <property type="term" value="F:calcium channel activity"/>
    <property type="evidence" value="ECO:0007669"/>
    <property type="project" value="TreeGrafter"/>
</dbReference>
<dbReference type="GO" id="GO:0008273">
    <property type="term" value="F:calcium, potassium:sodium antiporter activity"/>
    <property type="evidence" value="ECO:0007669"/>
    <property type="project" value="TreeGrafter"/>
</dbReference>
<dbReference type="GO" id="GO:0015293">
    <property type="term" value="F:symporter activity"/>
    <property type="evidence" value="ECO:0007669"/>
    <property type="project" value="UniProtKB-KW"/>
</dbReference>
<dbReference type="GO" id="GO:0006874">
    <property type="term" value="P:intracellular calcium ion homeostasis"/>
    <property type="evidence" value="ECO:0007669"/>
    <property type="project" value="TreeGrafter"/>
</dbReference>
<dbReference type="GO" id="GO:0060292">
    <property type="term" value="P:long-term synaptic depression"/>
    <property type="evidence" value="ECO:0007669"/>
    <property type="project" value="TreeGrafter"/>
</dbReference>
<dbReference type="GO" id="GO:0060291">
    <property type="term" value="P:long-term synaptic potentiation"/>
    <property type="evidence" value="ECO:0007669"/>
    <property type="project" value="TreeGrafter"/>
</dbReference>
<dbReference type="GO" id="GO:0007601">
    <property type="term" value="P:visual perception"/>
    <property type="evidence" value="ECO:0007669"/>
    <property type="project" value="UniProtKB-KW"/>
</dbReference>
<dbReference type="InterPro" id="IPR004481">
    <property type="entry name" value="K/Na/Ca-exchanger"/>
</dbReference>
<dbReference type="PANTHER" id="PTHR10846">
    <property type="entry name" value="SODIUM/POTASSIUM/CALCIUM EXCHANGER"/>
    <property type="match status" value="1"/>
</dbReference>
<dbReference type="PANTHER" id="PTHR10846:SF36">
    <property type="entry name" value="SODIUM_POTASSIUM_CALCIUM EXCHANGER 1"/>
    <property type="match status" value="1"/>
</dbReference>
<evidence type="ECO:0000250" key="1">
    <source>
        <dbReference type="UniProtKB" id="O60721"/>
    </source>
</evidence>
<evidence type="ECO:0000250" key="2">
    <source>
        <dbReference type="UniProtKB" id="Q28139"/>
    </source>
</evidence>
<evidence type="ECO:0000255" key="3"/>
<evidence type="ECO:0000256" key="4">
    <source>
        <dbReference type="SAM" id="MobiDB-lite"/>
    </source>
</evidence>
<evidence type="ECO:0000305" key="5"/>
<gene>
    <name type="primary">SLC24A1</name>
    <name type="synonym">NCKX1</name>
</gene>
<protein>
    <recommendedName>
        <fullName>Sodium/potassium/calcium exchanger 1</fullName>
    </recommendedName>
    <alternativeName>
        <fullName>Na(+)/K(+)/Ca(2+)-exchange protein 1</fullName>
    </alternativeName>
    <alternativeName>
        <fullName>Retinal rod Na-Ca+K exchanger</fullName>
    </alternativeName>
    <alternativeName>
        <fullName>Solute carrier family 24 member 1</fullName>
    </alternativeName>
</protein>
<sequence length="300" mass="31671">DPGSQGVGAEAENTGERTGGEAEAPAEGENGERSGGDAALGGESEGKAENESEGDIPAERRGDDEDEGEIQAEGGEVKGDEDEGEIQAGEGGEVEGDEDEGEIQAGEGGEVEGDEDEGEIQAGEGGEVEGDEDEGEIQAGEGGEVKDDEGEIQAGEAGEVEGEDGEVEGGEDEGEIQAGEGGEGETGEQELNAEIQGEAKDDEEGVDGEGGGDGGDSEDEEEEDEEEDEEEEEEEEEEEEEENEQPLSLEWPETRRKQAIYLFLLPIVFPLWLTVPDVRRLEAKKFFVITFLGSILWIAM</sequence>
<organism>
    <name type="scientific">Bison bison</name>
    <name type="common">American bison</name>
    <name type="synonym">Bos bison</name>
    <dbReference type="NCBI Taxonomy" id="9901"/>
    <lineage>
        <taxon>Eukaryota</taxon>
        <taxon>Metazoa</taxon>
        <taxon>Chordata</taxon>
        <taxon>Craniata</taxon>
        <taxon>Vertebrata</taxon>
        <taxon>Euteleostomi</taxon>
        <taxon>Mammalia</taxon>
        <taxon>Eutheria</taxon>
        <taxon>Laurasiatheria</taxon>
        <taxon>Artiodactyla</taxon>
        <taxon>Ruminantia</taxon>
        <taxon>Pecora</taxon>
        <taxon>Bovidae</taxon>
        <taxon>Bovinae</taxon>
        <taxon>Bison</taxon>
    </lineage>
</organism>